<keyword id="KW-0030">Aminoacyl-tRNA synthetase</keyword>
<keyword id="KW-0067">ATP-binding</keyword>
<keyword id="KW-0963">Cytoplasm</keyword>
<keyword id="KW-0436">Ligase</keyword>
<keyword id="KW-0547">Nucleotide-binding</keyword>
<keyword id="KW-0648">Protein biosynthesis</keyword>
<keyword id="KW-1185">Reference proteome</keyword>
<keyword id="KW-0694">RNA-binding</keyword>
<feature type="chain" id="PRO_0000236692" description="Tyrosine--tRNA ligase">
    <location>
        <begin position="1"/>
        <end position="414"/>
    </location>
</feature>
<feature type="domain" description="S4 RNA-binding" evidence="1">
    <location>
        <begin position="352"/>
        <end position="413"/>
    </location>
</feature>
<feature type="short sequence motif" description="'HIGH' region">
    <location>
        <begin position="57"/>
        <end position="66"/>
    </location>
</feature>
<feature type="short sequence motif" description="'KMSKS' region">
    <location>
        <begin position="241"/>
        <end position="245"/>
    </location>
</feature>
<feature type="binding site" evidence="1">
    <location>
        <position position="244"/>
    </location>
    <ligand>
        <name>ATP</name>
        <dbReference type="ChEBI" id="CHEBI:30616"/>
    </ligand>
</feature>
<dbReference type="EC" id="6.1.1.1" evidence="1"/>
<dbReference type="EMBL" id="AP006627">
    <property type="protein sequence ID" value="BAD65292.1"/>
    <property type="molecule type" value="Genomic_DNA"/>
</dbReference>
<dbReference type="RefSeq" id="WP_011247600.1">
    <property type="nucleotide sequence ID" value="NC_006582.1"/>
</dbReference>
<dbReference type="SMR" id="Q5WEB8"/>
<dbReference type="STRING" id="66692.ABC2758"/>
<dbReference type="KEGG" id="bcl:ABC2758"/>
<dbReference type="eggNOG" id="COG0162">
    <property type="taxonomic scope" value="Bacteria"/>
</dbReference>
<dbReference type="HOGENOM" id="CLU_024003_5_0_9"/>
<dbReference type="OrthoDB" id="9804243at2"/>
<dbReference type="Proteomes" id="UP000001168">
    <property type="component" value="Chromosome"/>
</dbReference>
<dbReference type="GO" id="GO:0005829">
    <property type="term" value="C:cytosol"/>
    <property type="evidence" value="ECO:0007669"/>
    <property type="project" value="TreeGrafter"/>
</dbReference>
<dbReference type="GO" id="GO:0005524">
    <property type="term" value="F:ATP binding"/>
    <property type="evidence" value="ECO:0007669"/>
    <property type="project" value="UniProtKB-UniRule"/>
</dbReference>
<dbReference type="GO" id="GO:0003723">
    <property type="term" value="F:RNA binding"/>
    <property type="evidence" value="ECO:0007669"/>
    <property type="project" value="UniProtKB-KW"/>
</dbReference>
<dbReference type="GO" id="GO:0004831">
    <property type="term" value="F:tyrosine-tRNA ligase activity"/>
    <property type="evidence" value="ECO:0007669"/>
    <property type="project" value="UniProtKB-UniRule"/>
</dbReference>
<dbReference type="GO" id="GO:0006437">
    <property type="term" value="P:tyrosyl-tRNA aminoacylation"/>
    <property type="evidence" value="ECO:0007669"/>
    <property type="project" value="UniProtKB-UniRule"/>
</dbReference>
<dbReference type="CDD" id="cd00165">
    <property type="entry name" value="S4"/>
    <property type="match status" value="1"/>
</dbReference>
<dbReference type="CDD" id="cd00805">
    <property type="entry name" value="TyrRS_core"/>
    <property type="match status" value="1"/>
</dbReference>
<dbReference type="FunFam" id="1.10.240.10:FF:000006">
    <property type="entry name" value="Tyrosine--tRNA ligase"/>
    <property type="match status" value="1"/>
</dbReference>
<dbReference type="FunFam" id="3.10.290.10:FF:000022">
    <property type="entry name" value="Tyrosine--tRNA ligase"/>
    <property type="match status" value="1"/>
</dbReference>
<dbReference type="FunFam" id="3.40.50.620:FF:000061">
    <property type="entry name" value="Tyrosine--tRNA ligase"/>
    <property type="match status" value="1"/>
</dbReference>
<dbReference type="Gene3D" id="3.40.50.620">
    <property type="entry name" value="HUPs"/>
    <property type="match status" value="1"/>
</dbReference>
<dbReference type="Gene3D" id="3.10.290.10">
    <property type="entry name" value="RNA-binding S4 domain"/>
    <property type="match status" value="1"/>
</dbReference>
<dbReference type="Gene3D" id="1.10.240.10">
    <property type="entry name" value="Tyrosyl-Transfer RNA Synthetase"/>
    <property type="match status" value="1"/>
</dbReference>
<dbReference type="HAMAP" id="MF_02007">
    <property type="entry name" value="Tyr_tRNA_synth_type2"/>
    <property type="match status" value="1"/>
</dbReference>
<dbReference type="InterPro" id="IPR001412">
    <property type="entry name" value="aa-tRNA-synth_I_CS"/>
</dbReference>
<dbReference type="InterPro" id="IPR002305">
    <property type="entry name" value="aa-tRNA-synth_Ic"/>
</dbReference>
<dbReference type="InterPro" id="IPR014729">
    <property type="entry name" value="Rossmann-like_a/b/a_fold"/>
</dbReference>
<dbReference type="InterPro" id="IPR002942">
    <property type="entry name" value="S4_RNA-bd"/>
</dbReference>
<dbReference type="InterPro" id="IPR036986">
    <property type="entry name" value="S4_RNA-bd_sf"/>
</dbReference>
<dbReference type="InterPro" id="IPR054608">
    <property type="entry name" value="SYY-like_C"/>
</dbReference>
<dbReference type="InterPro" id="IPR002307">
    <property type="entry name" value="Tyr-tRNA-ligase"/>
</dbReference>
<dbReference type="InterPro" id="IPR024088">
    <property type="entry name" value="Tyr-tRNA-ligase_bac-type"/>
</dbReference>
<dbReference type="InterPro" id="IPR024108">
    <property type="entry name" value="Tyr-tRNA-ligase_bac_2"/>
</dbReference>
<dbReference type="NCBIfam" id="TIGR00234">
    <property type="entry name" value="tyrS"/>
    <property type="match status" value="1"/>
</dbReference>
<dbReference type="PANTHER" id="PTHR11766:SF1">
    <property type="entry name" value="TYROSINE--TRNA LIGASE"/>
    <property type="match status" value="1"/>
</dbReference>
<dbReference type="PANTHER" id="PTHR11766">
    <property type="entry name" value="TYROSYL-TRNA SYNTHETASE"/>
    <property type="match status" value="1"/>
</dbReference>
<dbReference type="Pfam" id="PF22421">
    <property type="entry name" value="SYY_C-terminal"/>
    <property type="match status" value="1"/>
</dbReference>
<dbReference type="Pfam" id="PF00579">
    <property type="entry name" value="tRNA-synt_1b"/>
    <property type="match status" value="1"/>
</dbReference>
<dbReference type="PRINTS" id="PR01040">
    <property type="entry name" value="TRNASYNTHTYR"/>
</dbReference>
<dbReference type="SMART" id="SM00363">
    <property type="entry name" value="S4"/>
    <property type="match status" value="1"/>
</dbReference>
<dbReference type="SUPFAM" id="SSF55174">
    <property type="entry name" value="Alpha-L RNA-binding motif"/>
    <property type="match status" value="1"/>
</dbReference>
<dbReference type="SUPFAM" id="SSF52374">
    <property type="entry name" value="Nucleotidylyl transferase"/>
    <property type="match status" value="1"/>
</dbReference>
<dbReference type="PROSITE" id="PS00178">
    <property type="entry name" value="AA_TRNA_LIGASE_I"/>
    <property type="match status" value="1"/>
</dbReference>
<dbReference type="PROSITE" id="PS50889">
    <property type="entry name" value="S4"/>
    <property type="match status" value="1"/>
</dbReference>
<organism>
    <name type="scientific">Shouchella clausii (strain KSM-K16)</name>
    <name type="common">Alkalihalobacillus clausii</name>
    <dbReference type="NCBI Taxonomy" id="66692"/>
    <lineage>
        <taxon>Bacteria</taxon>
        <taxon>Bacillati</taxon>
        <taxon>Bacillota</taxon>
        <taxon>Bacilli</taxon>
        <taxon>Bacillales</taxon>
        <taxon>Bacillaceae</taxon>
        <taxon>Shouchella</taxon>
    </lineage>
</organism>
<protein>
    <recommendedName>
        <fullName evidence="1">Tyrosine--tRNA ligase</fullName>
        <ecNumber evidence="1">6.1.1.1</ecNumber>
    </recommendedName>
    <alternativeName>
        <fullName evidence="1">Tyrosyl-tRNA synthetase</fullName>
        <shortName evidence="1">TyrRS</shortName>
    </alternativeName>
</protein>
<comment type="function">
    <text evidence="1">Catalyzes the attachment of tyrosine to tRNA(Tyr) in a two-step reaction: tyrosine is first activated by ATP to form Tyr-AMP and then transferred to the acceptor end of tRNA(Tyr).</text>
</comment>
<comment type="catalytic activity">
    <reaction evidence="1">
        <text>tRNA(Tyr) + L-tyrosine + ATP = L-tyrosyl-tRNA(Tyr) + AMP + diphosphate + H(+)</text>
        <dbReference type="Rhea" id="RHEA:10220"/>
        <dbReference type="Rhea" id="RHEA-COMP:9706"/>
        <dbReference type="Rhea" id="RHEA-COMP:9707"/>
        <dbReference type="ChEBI" id="CHEBI:15378"/>
        <dbReference type="ChEBI" id="CHEBI:30616"/>
        <dbReference type="ChEBI" id="CHEBI:33019"/>
        <dbReference type="ChEBI" id="CHEBI:58315"/>
        <dbReference type="ChEBI" id="CHEBI:78442"/>
        <dbReference type="ChEBI" id="CHEBI:78536"/>
        <dbReference type="ChEBI" id="CHEBI:456215"/>
        <dbReference type="EC" id="6.1.1.1"/>
    </reaction>
</comment>
<comment type="subunit">
    <text evidence="1">Homodimer.</text>
</comment>
<comment type="subcellular location">
    <subcellularLocation>
        <location evidence="1">Cytoplasm</location>
    </subcellularLocation>
</comment>
<comment type="similarity">
    <text evidence="1">Belongs to the class-I aminoacyl-tRNA synthetase family. TyrS type 2 subfamily.</text>
</comment>
<name>SYY_SHOC1</name>
<evidence type="ECO:0000255" key="1">
    <source>
        <dbReference type="HAMAP-Rule" id="MF_02007"/>
    </source>
</evidence>
<accession>Q5WEB8</accession>
<gene>
    <name evidence="1" type="primary">tyrS</name>
    <name type="ordered locus">ABC2758</name>
</gene>
<sequence length="414" mass="47012">MDEKQPLTPEQQKLVDEQVEALMRGVVEVVPKEAFREKIEKSVRTGKPLNIKLGMDPSAPDVHIGHTVVLQKLRQFQEYGHHIQLLIGDFTGKIGDPTGKSETRKVLTDEQVKQNAQTYVEQYGKILDIEKTEILYNSRWLSELKFDDVLKLAGQMTVARMLEREDFSKRYKTGQPISVHEFFYPLMQGYDSVAMETDIEVGGTDQTFNLLMGRQLQEAYGKEKQVMLTLPLIEGLDGVRKMSKSLNNYIGIDEAPNEIFGKAMSIPDELMVKYYKLATDVPMDEIEALEKGLADGSVHPRDAKMRLGHKFVEMYHGKEAADEAEQYFKTVFQKRALPEDIPVFSWEGDKEVPLIDLLVTLNMQSSKGEARRMIQGGGVKINEQKITDIHTVVSVEDNMIVQVGKRKFAKLSLT</sequence>
<proteinExistence type="inferred from homology"/>
<reference key="1">
    <citation type="submission" date="2003-10" db="EMBL/GenBank/DDBJ databases">
        <title>The complete genome sequence of the alkaliphilic Bacillus clausii KSM-K16.</title>
        <authorList>
            <person name="Takaki Y."/>
            <person name="Kageyama Y."/>
            <person name="Shimamura S."/>
            <person name="Suzuki H."/>
            <person name="Nishi S."/>
            <person name="Hatada Y."/>
            <person name="Kawai S."/>
            <person name="Ito S."/>
            <person name="Horikoshi K."/>
        </authorList>
    </citation>
    <scope>NUCLEOTIDE SEQUENCE [LARGE SCALE GENOMIC DNA]</scope>
    <source>
        <strain>KSM-K16</strain>
    </source>
</reference>